<sequence length="578" mass="63146">MGCGLNKLEKRDEKRPGNIYSTLKRPQVETKIDVSYEYRFLEFTTLSAAELPGSSAVRLASLRDLPAQLLELYQQGFSLAALHPFVQPTHEREKTPLEHIFRAILIKKTDRSQKTDLHNEGYILELDCCSSLDHPTDQKLIPEFIKKIQEAASQGLKFVGVIPQYHSSVNSAGSSAPVSTANSTEDARDAKNARGDHASLENEKPGTGDVCSAPAGRNQSPEPSSGPRGEVPLAKQPSSPSGEGDGGELSPQGVSKTLDGPESNPLEVHEEPLSGKMEIFTLFNKPKSHQKCRQYYPVTIPLHVSKNGQTVSGLDANWLEHMSDHFRKGGMLVNAVFYLGIVNDSLHGLTDGVFIFEAVSTEDSKTIQGYDAIVVEQWTVLEGVEVQTDYVPLLNSLAAYGWQLTCVLPTPVVKTTSEGSVSTKQIVFLQRPCLPQKIKKKESKFQWRFSREEMHNRQMRKSKGKLSARDKQQAEENEKNLEDQSSKAGDMGNCVSGQQQEGGVSEEMKGPVQEDKGEQLSPGGLLCGVGVEGEAVQNGPASHSRALVGICTGHSNPGEDARDGDAEEVRELGTVEEN</sequence>
<proteinExistence type="evidence at protein level"/>
<organism>
    <name type="scientific">Homo sapiens</name>
    <name type="common">Human</name>
    <dbReference type="NCBI Taxonomy" id="9606"/>
    <lineage>
        <taxon>Eukaryota</taxon>
        <taxon>Metazoa</taxon>
        <taxon>Chordata</taxon>
        <taxon>Craniata</taxon>
        <taxon>Vertebrata</taxon>
        <taxon>Euteleostomi</taxon>
        <taxon>Mammalia</taxon>
        <taxon>Eutheria</taxon>
        <taxon>Euarchontoglires</taxon>
        <taxon>Primates</taxon>
        <taxon>Haplorrhini</taxon>
        <taxon>Catarrhini</taxon>
        <taxon>Hominidae</taxon>
        <taxon>Homo</taxon>
    </lineage>
</organism>
<name>RFTN1_HUMAN</name>
<protein>
    <recommendedName>
        <fullName>Raftlin</fullName>
    </recommendedName>
    <alternativeName>
        <fullName>Cell migration-inducing gene 2 protein</fullName>
    </alternativeName>
    <alternativeName>
        <fullName>Raft-linking protein</fullName>
    </alternativeName>
</protein>
<keyword id="KW-1003">Cell membrane</keyword>
<keyword id="KW-0963">Cytoplasm</keyword>
<keyword id="KW-0967">Endosome</keyword>
<keyword id="KW-0449">Lipoprotein</keyword>
<keyword id="KW-0472">Membrane</keyword>
<keyword id="KW-0519">Myristate</keyword>
<keyword id="KW-0564">Palmitate</keyword>
<keyword id="KW-0597">Phosphoprotein</keyword>
<keyword id="KW-1267">Proteomics identification</keyword>
<keyword id="KW-1185">Reference proteome</keyword>
<gene>
    <name type="primary">RFTN1</name>
    <name type="synonym">KIAA0084</name>
    <name type="ORF">MIG2</name>
</gene>
<comment type="function">
    <text evidence="1 3 5 6">Involved in protein trafficking via association with clathrin and AP2 complex (PubMed:21266579, PubMed:27022195). Upon bacterial lipopolysaccharide stimulation, mediates internalization of TLR4 to endosomes in dendritic cells and macrophages; and internalization of poly(I:C) to TLR3-positive endosomes in myeloid dendritic cells and epithelial cells; resulting in activation of TICAM1-mediated signaling and subsequent IFNB1 production (PubMed:21266579, PubMed:27022195). Involved in T-cell antigen receptor-mediated signaling by regulating tyrosine kinase LCK localization, T-cell dependent antibody production and cytokine secretion (By similarity). May regulate B-cell antigen receptor-mediated signaling (PubMed:12805216). May play a pivotal role in the formation and/or maintenance of lipid rafts (PubMed:12805216).</text>
</comment>
<comment type="subunit">
    <text evidence="5 6">Interacts with TLR4; the interaction occurs in response to lipopolysaccharide stimulation (PubMed:27022195). Interacts with CLTC; the interaction occurs in response to pathogens (PubMed:21266579, PubMed:27022195). Interacts with AP2A1 and AP2B1 (PubMed:27022195).</text>
</comment>
<comment type="subcellular location">
    <subcellularLocation>
        <location evidence="3 5 6">Cell membrane</location>
        <topology evidence="3">Lipid-anchor</topology>
    </subcellularLocation>
    <subcellularLocation>
        <location evidence="5 6">Cytoplasm</location>
    </subcellularLocation>
    <subcellularLocation>
        <location evidence="3">Membrane raft</location>
    </subcellularLocation>
    <subcellularLocation>
        <location evidence="5 6">Endosome</location>
    </subcellularLocation>
    <subcellularLocation>
        <location evidence="5">Early endosome</location>
    </subcellularLocation>
    <text evidence="5 6">Translocates from cytoplasm to cell membrane where it colocalizes with poly (I:C) and then moves to endosomes where it colocalizes with TLR3 (PubMed:21266579). Translocates from cytoplasm to cell membrane where it colocalizes with TLR4 and then together with TLR4 moves to endosomes, upon lipopolysaccharide stimulation (PubMed:27022195).</text>
</comment>
<comment type="tissue specificity">
    <text evidence="3 5 6">Expressed in B-cells (at protein level) (PubMed:12805216). Expressed in dendritic cells and macrophages (PubMed:21266579, PubMed:27022195).</text>
</comment>
<comment type="similarity">
    <text evidence="8">Belongs to the raftlin family.</text>
</comment>
<comment type="sequence caution" evidence="8">
    <conflict type="erroneous initiation">
        <sequence resource="EMBL-CDS" id="AAH51336"/>
    </conflict>
</comment>
<comment type="sequence caution" evidence="8">
    <conflict type="erroneous initiation">
        <sequence resource="EMBL-CDS" id="AAH69209"/>
    </conflict>
</comment>
<comment type="sequence caution" evidence="8">
    <conflict type="erroneous initiation">
        <sequence resource="EMBL-CDS" id="BAA07644"/>
    </conflict>
</comment>
<dbReference type="EMBL" id="AY237654">
    <property type="protein sequence ID" value="AAO91814.1"/>
    <property type="molecule type" value="mRNA"/>
</dbReference>
<dbReference type="EMBL" id="D42043">
    <property type="protein sequence ID" value="BAA07644.1"/>
    <property type="status" value="ALT_INIT"/>
    <property type="molecule type" value="mRNA"/>
</dbReference>
<dbReference type="EMBL" id="BC051336">
    <property type="protein sequence ID" value="AAH51336.1"/>
    <property type="status" value="ALT_INIT"/>
    <property type="molecule type" value="mRNA"/>
</dbReference>
<dbReference type="EMBL" id="BC069209">
    <property type="protein sequence ID" value="AAH69209.1"/>
    <property type="status" value="ALT_INIT"/>
    <property type="molecule type" value="mRNA"/>
</dbReference>
<dbReference type="EMBL" id="BC098270">
    <property type="protein sequence ID" value="AAH98270.2"/>
    <property type="molecule type" value="mRNA"/>
</dbReference>
<dbReference type="EMBL" id="BC100667">
    <property type="protein sequence ID" value="AAI00668.2"/>
    <property type="molecule type" value="mRNA"/>
</dbReference>
<dbReference type="EMBL" id="BC100669">
    <property type="protein sequence ID" value="AAI00670.2"/>
    <property type="molecule type" value="mRNA"/>
</dbReference>
<dbReference type="EMBL" id="BC121795">
    <property type="protein sequence ID" value="AAI21796.1"/>
    <property type="molecule type" value="mRNA"/>
</dbReference>
<dbReference type="CCDS" id="CCDS33712.1"/>
<dbReference type="RefSeq" id="NP_055965.1">
    <property type="nucleotide sequence ID" value="NM_015150.2"/>
</dbReference>
<dbReference type="RefSeq" id="XP_005265042.1">
    <property type="nucleotide sequence ID" value="XM_005264985.2"/>
</dbReference>
<dbReference type="RefSeq" id="XP_005265043.1">
    <property type="nucleotide sequence ID" value="XM_005264986.3"/>
</dbReference>
<dbReference type="RefSeq" id="XP_006713132.1">
    <property type="nucleotide sequence ID" value="XM_006713069.2"/>
</dbReference>
<dbReference type="RefSeq" id="XP_011531832.1">
    <property type="nucleotide sequence ID" value="XM_011533530.2"/>
</dbReference>
<dbReference type="RefSeq" id="XP_047303736.1">
    <property type="nucleotide sequence ID" value="XM_047447780.1"/>
</dbReference>
<dbReference type="RefSeq" id="XP_054201799.1">
    <property type="nucleotide sequence ID" value="XM_054345824.1"/>
</dbReference>
<dbReference type="RefSeq" id="XP_054201800.1">
    <property type="nucleotide sequence ID" value="XM_054345825.1"/>
</dbReference>
<dbReference type="RefSeq" id="XP_054201801.1">
    <property type="nucleotide sequence ID" value="XM_054345826.1"/>
</dbReference>
<dbReference type="RefSeq" id="XP_054201802.1">
    <property type="nucleotide sequence ID" value="XM_054345827.1"/>
</dbReference>
<dbReference type="BioGRID" id="116792">
    <property type="interactions" value="44"/>
</dbReference>
<dbReference type="CORUM" id="Q14699"/>
<dbReference type="ELM" id="Q14699"/>
<dbReference type="FunCoup" id="Q14699">
    <property type="interactions" value="465"/>
</dbReference>
<dbReference type="IntAct" id="Q14699">
    <property type="interactions" value="30"/>
</dbReference>
<dbReference type="MINT" id="Q14699"/>
<dbReference type="STRING" id="9606.ENSP00000334153"/>
<dbReference type="GlyGen" id="Q14699">
    <property type="glycosylation" value="2 sites, 1 O-linked glycan (1 site)"/>
</dbReference>
<dbReference type="iPTMnet" id="Q14699"/>
<dbReference type="PhosphoSitePlus" id="Q14699"/>
<dbReference type="SwissPalm" id="Q14699"/>
<dbReference type="BioMuta" id="RFTN1"/>
<dbReference type="DMDM" id="115502444"/>
<dbReference type="CPTAC" id="CPTAC-1000"/>
<dbReference type="jPOST" id="Q14699"/>
<dbReference type="MassIVE" id="Q14699"/>
<dbReference type="PaxDb" id="9606-ENSP00000334153"/>
<dbReference type="PeptideAtlas" id="Q14699"/>
<dbReference type="ProteomicsDB" id="60140"/>
<dbReference type="Pumba" id="Q14699"/>
<dbReference type="Antibodypedia" id="53317">
    <property type="antibodies" value="119 antibodies from 24 providers"/>
</dbReference>
<dbReference type="DNASU" id="23180"/>
<dbReference type="Ensembl" id="ENST00000334133.9">
    <property type="protein sequence ID" value="ENSP00000334153.4"/>
    <property type="gene ID" value="ENSG00000131378.14"/>
</dbReference>
<dbReference type="GeneID" id="23180"/>
<dbReference type="KEGG" id="hsa:23180"/>
<dbReference type="MANE-Select" id="ENST00000334133.9">
    <property type="protein sequence ID" value="ENSP00000334153.4"/>
    <property type="RefSeq nucleotide sequence ID" value="NM_015150.2"/>
    <property type="RefSeq protein sequence ID" value="NP_055965.1"/>
</dbReference>
<dbReference type="UCSC" id="uc003cay.4">
    <property type="organism name" value="human"/>
</dbReference>
<dbReference type="AGR" id="HGNC:30278"/>
<dbReference type="CTD" id="23180"/>
<dbReference type="DisGeNET" id="23180"/>
<dbReference type="GeneCards" id="RFTN1"/>
<dbReference type="HGNC" id="HGNC:30278">
    <property type="gene designation" value="RFTN1"/>
</dbReference>
<dbReference type="HPA" id="ENSG00000131378">
    <property type="expression patterns" value="Tissue enhanced (lymphoid)"/>
</dbReference>
<dbReference type="MIM" id="618210">
    <property type="type" value="gene"/>
</dbReference>
<dbReference type="neXtProt" id="NX_Q14699"/>
<dbReference type="OpenTargets" id="ENSG00000131378"/>
<dbReference type="PharmGKB" id="PA162401206"/>
<dbReference type="VEuPathDB" id="HostDB:ENSG00000131378"/>
<dbReference type="eggNOG" id="ENOG502QVP2">
    <property type="taxonomic scope" value="Eukaryota"/>
</dbReference>
<dbReference type="GeneTree" id="ENSGT00530000063609"/>
<dbReference type="HOGENOM" id="CLU_025878_1_0_1"/>
<dbReference type="InParanoid" id="Q14699"/>
<dbReference type="OMA" id="CPEDHAS"/>
<dbReference type="OrthoDB" id="9942562at2759"/>
<dbReference type="PAN-GO" id="Q14699">
    <property type="GO annotations" value="0 GO annotations based on evolutionary models"/>
</dbReference>
<dbReference type="PhylomeDB" id="Q14699"/>
<dbReference type="TreeFam" id="TF333285"/>
<dbReference type="PathwayCommons" id="Q14699"/>
<dbReference type="SignaLink" id="Q14699"/>
<dbReference type="BioGRID-ORCS" id="23180">
    <property type="hits" value="12 hits in 1145 CRISPR screens"/>
</dbReference>
<dbReference type="CD-CODE" id="FB4E32DD">
    <property type="entry name" value="Presynaptic clusters and postsynaptic densities"/>
</dbReference>
<dbReference type="ChiTaRS" id="RFTN1">
    <property type="organism name" value="human"/>
</dbReference>
<dbReference type="GenomeRNAi" id="23180"/>
<dbReference type="Pharos" id="Q14699">
    <property type="development level" value="Tbio"/>
</dbReference>
<dbReference type="PRO" id="PR:Q14699"/>
<dbReference type="Proteomes" id="UP000005640">
    <property type="component" value="Chromosome 3"/>
</dbReference>
<dbReference type="RNAct" id="Q14699">
    <property type="molecule type" value="protein"/>
</dbReference>
<dbReference type="Bgee" id="ENSG00000131378">
    <property type="expression patterns" value="Expressed in decidua and 193 other cell types or tissues"/>
</dbReference>
<dbReference type="ExpressionAtlas" id="Q14699">
    <property type="expression patterns" value="baseline and differential"/>
</dbReference>
<dbReference type="GO" id="GO:0005737">
    <property type="term" value="C:cytoplasm"/>
    <property type="evidence" value="ECO:0000314"/>
    <property type="project" value="MGI"/>
</dbReference>
<dbReference type="GO" id="GO:0005769">
    <property type="term" value="C:early endosome"/>
    <property type="evidence" value="ECO:0007669"/>
    <property type="project" value="UniProtKB-SubCell"/>
</dbReference>
<dbReference type="GO" id="GO:0005768">
    <property type="term" value="C:endosome"/>
    <property type="evidence" value="ECO:0000314"/>
    <property type="project" value="MGI"/>
</dbReference>
<dbReference type="GO" id="GO:0070062">
    <property type="term" value="C:extracellular exosome"/>
    <property type="evidence" value="ECO:0007005"/>
    <property type="project" value="UniProtKB"/>
</dbReference>
<dbReference type="GO" id="GO:0045121">
    <property type="term" value="C:membrane raft"/>
    <property type="evidence" value="ECO:0000314"/>
    <property type="project" value="UniProtKB"/>
</dbReference>
<dbReference type="GO" id="GO:0005886">
    <property type="term" value="C:plasma membrane"/>
    <property type="evidence" value="ECO:0000314"/>
    <property type="project" value="UniProtKB"/>
</dbReference>
<dbReference type="GO" id="GO:0032991">
    <property type="term" value="C:protein-containing complex"/>
    <property type="evidence" value="ECO:0000314"/>
    <property type="project" value="MGI"/>
</dbReference>
<dbReference type="GO" id="GO:0003725">
    <property type="term" value="F:double-stranded RNA binding"/>
    <property type="evidence" value="ECO:0000314"/>
    <property type="project" value="MGI"/>
</dbReference>
<dbReference type="GO" id="GO:0050853">
    <property type="term" value="P:B cell receptor signaling pathway"/>
    <property type="evidence" value="ECO:0000315"/>
    <property type="project" value="UniProtKB"/>
</dbReference>
<dbReference type="GO" id="GO:0033227">
    <property type="term" value="P:dsRNA transport"/>
    <property type="evidence" value="ECO:0000315"/>
    <property type="project" value="MGI"/>
</dbReference>
<dbReference type="GO" id="GO:0001765">
    <property type="term" value="P:membrane raft assembly"/>
    <property type="evidence" value="ECO:0000315"/>
    <property type="project" value="UniProtKB"/>
</dbReference>
<dbReference type="GO" id="GO:0040010">
    <property type="term" value="P:positive regulation of growth rate"/>
    <property type="evidence" value="ECO:0000315"/>
    <property type="project" value="UniProtKB"/>
</dbReference>
<dbReference type="GO" id="GO:0032740">
    <property type="term" value="P:positive regulation of interleukin-17 production"/>
    <property type="evidence" value="ECO:0000250"/>
    <property type="project" value="UniProtKB"/>
</dbReference>
<dbReference type="GO" id="GO:1903044">
    <property type="term" value="P:protein localization to membrane raft"/>
    <property type="evidence" value="ECO:0000250"/>
    <property type="project" value="CAFA"/>
</dbReference>
<dbReference type="GO" id="GO:0032596">
    <property type="term" value="P:protein transport into membrane raft"/>
    <property type="evidence" value="ECO:0000250"/>
    <property type="project" value="CAFA"/>
</dbReference>
<dbReference type="GO" id="GO:0043330">
    <property type="term" value="P:response to exogenous dsRNA"/>
    <property type="evidence" value="ECO:0000315"/>
    <property type="project" value="MGI"/>
</dbReference>
<dbReference type="GO" id="GO:0002457">
    <property type="term" value="P:T cell antigen processing and presentation"/>
    <property type="evidence" value="ECO:0000250"/>
    <property type="project" value="CAFA"/>
</dbReference>
<dbReference type="GO" id="GO:0050852">
    <property type="term" value="P:T cell receptor signaling pathway"/>
    <property type="evidence" value="ECO:0000250"/>
    <property type="project" value="CAFA"/>
</dbReference>
<dbReference type="GO" id="GO:0034138">
    <property type="term" value="P:toll-like receptor 3 signaling pathway"/>
    <property type="evidence" value="ECO:0000315"/>
    <property type="project" value="MGI"/>
</dbReference>
<dbReference type="InterPro" id="IPR028169">
    <property type="entry name" value="Raftlin"/>
</dbReference>
<dbReference type="PANTHER" id="PTHR17601:SF3">
    <property type="entry name" value="RAFTLIN"/>
    <property type="match status" value="1"/>
</dbReference>
<dbReference type="PANTHER" id="PTHR17601">
    <property type="entry name" value="RAFTLIN-RELATED"/>
    <property type="match status" value="1"/>
</dbReference>
<dbReference type="Pfam" id="PF15250">
    <property type="entry name" value="Raftlin"/>
    <property type="match status" value="1"/>
</dbReference>
<accession>Q14699</accession>
<accession>Q0D2G0</accession>
<accession>Q496Y2</accession>
<accession>Q4QQI7</accession>
<accession>Q5JB48</accession>
<accession>Q7Z7P2</accession>
<feature type="initiator methionine" description="Removed">
    <location>
        <position position="1"/>
    </location>
</feature>
<feature type="chain" id="PRO_0000050718" description="Raftlin">
    <location>
        <begin position="2"/>
        <end position="578"/>
    </location>
</feature>
<feature type="region of interest" description="Disordered" evidence="2">
    <location>
        <begin position="169"/>
        <end position="271"/>
    </location>
</feature>
<feature type="region of interest" description="Disordered" evidence="2">
    <location>
        <begin position="449"/>
        <end position="525"/>
    </location>
</feature>
<feature type="region of interest" description="Disordered" evidence="2">
    <location>
        <begin position="551"/>
        <end position="578"/>
    </location>
</feature>
<feature type="compositionally biased region" description="Polar residues" evidence="2">
    <location>
        <begin position="169"/>
        <end position="184"/>
    </location>
</feature>
<feature type="compositionally biased region" description="Basic and acidic residues" evidence="2">
    <location>
        <begin position="185"/>
        <end position="206"/>
    </location>
</feature>
<feature type="compositionally biased region" description="Basic residues" evidence="2">
    <location>
        <begin position="457"/>
        <end position="466"/>
    </location>
</feature>
<feature type="compositionally biased region" description="Basic and acidic residues" evidence="2">
    <location>
        <begin position="467"/>
        <end position="485"/>
    </location>
</feature>
<feature type="compositionally biased region" description="Basic and acidic residues" evidence="2">
    <location>
        <begin position="506"/>
        <end position="518"/>
    </location>
</feature>
<feature type="compositionally biased region" description="Basic and acidic residues" evidence="2">
    <location>
        <begin position="557"/>
        <end position="578"/>
    </location>
</feature>
<feature type="modified residue" description="Phosphoserine" evidence="1">
    <location>
        <position position="183"/>
    </location>
</feature>
<feature type="modified residue" description="Phosphoserine" evidence="11">
    <location>
        <position position="199"/>
    </location>
</feature>
<feature type="modified residue" description="Phosphoserine" evidence="10">
    <location>
        <position position="220"/>
    </location>
</feature>
<feature type="modified residue" description="Phosphoserine" evidence="1">
    <location>
        <position position="505"/>
    </location>
</feature>
<feature type="lipid moiety-binding region" description="N-myristoyl glycine" evidence="3 4">
    <location>
        <position position="2"/>
    </location>
</feature>
<feature type="lipid moiety-binding region" description="S-palmitoyl cysteine" evidence="9">
    <location>
        <position position="3"/>
    </location>
</feature>
<feature type="sequence variant" id="VAR_051317" description="In dbSNP:rs34276015.">
    <original>E</original>
    <variation>K</variation>
    <location>
        <position position="248"/>
    </location>
</feature>
<feature type="sequence variant" id="VAR_061699" description="In dbSNP:rs11554130." evidence="7">
    <original>V</original>
    <variation>I</variation>
    <location>
        <position position="421"/>
    </location>
</feature>
<feature type="mutagenesis site" description="Loss of association with membranes. Same effect; when associated with S-3." evidence="3">
    <original>G</original>
    <variation>A</variation>
    <location>
        <position position="2"/>
    </location>
</feature>
<feature type="mutagenesis site" description="Partially affects association with membranes. Loss of association with membranes; when associated with A-2." evidence="3">
    <original>C</original>
    <variation>S</variation>
    <location>
        <position position="3"/>
    </location>
</feature>
<feature type="sequence conflict" description="In Ref. 3; AAH98270." evidence="8" ref="3">
    <original>V</original>
    <variation>A</variation>
    <location>
        <position position="86"/>
    </location>
</feature>
<feature type="sequence conflict" description="In Ref. 3; AAH51336/AAH69209." evidence="8" ref="3">
    <original>C</original>
    <variation>S</variation>
    <location>
        <position position="211"/>
    </location>
</feature>
<feature type="sequence conflict" description="In Ref. 3; AAH51336/AAH69209." evidence="8" ref="3">
    <original>A</original>
    <variation>V</variation>
    <location>
        <position position="358"/>
    </location>
</feature>
<evidence type="ECO:0000250" key="1">
    <source>
        <dbReference type="UniProtKB" id="Q6A0D4"/>
    </source>
</evidence>
<evidence type="ECO:0000256" key="2">
    <source>
        <dbReference type="SAM" id="MobiDB-lite"/>
    </source>
</evidence>
<evidence type="ECO:0000269" key="3">
    <source>
    </source>
</evidence>
<evidence type="ECO:0000269" key="4">
    <source>
    </source>
</evidence>
<evidence type="ECO:0000269" key="5">
    <source>
    </source>
</evidence>
<evidence type="ECO:0000269" key="6">
    <source>
    </source>
</evidence>
<evidence type="ECO:0000269" key="7">
    <source ref="1"/>
</evidence>
<evidence type="ECO:0000305" key="8"/>
<evidence type="ECO:0000305" key="9">
    <source>
    </source>
</evidence>
<evidence type="ECO:0007744" key="10">
    <source>
    </source>
</evidence>
<evidence type="ECO:0007744" key="11">
    <source>
    </source>
</evidence>
<reference key="1">
    <citation type="submission" date="2003-02" db="EMBL/GenBank/DDBJ databases">
        <title>Identification of a human cell migration gene 2.</title>
        <authorList>
            <person name="Kim J.W."/>
        </authorList>
    </citation>
    <scope>NUCLEOTIDE SEQUENCE [LARGE SCALE MRNA]</scope>
    <scope>VARIANT ILE-421</scope>
</reference>
<reference key="2">
    <citation type="journal article" date="1995" name="DNA Res.">
        <title>Prediction of the coding sequences of unidentified human genes. III. The coding sequences of 40 new genes (KIAA0081-KIAA0120) deduced by analysis of cDNA clones from human cell line KG-1.</title>
        <authorList>
            <person name="Nagase T."/>
            <person name="Miyajima N."/>
            <person name="Tanaka A."/>
            <person name="Sazuka T."/>
            <person name="Seki N."/>
            <person name="Sato S."/>
            <person name="Tabata S."/>
            <person name="Ishikawa K."/>
            <person name="Kawarabayasi Y."/>
            <person name="Kotani H."/>
            <person name="Nomura N."/>
        </authorList>
    </citation>
    <scope>NUCLEOTIDE SEQUENCE [LARGE SCALE MRNA]</scope>
    <source>
        <tissue>Bone marrow</tissue>
    </source>
</reference>
<reference key="3">
    <citation type="journal article" date="2004" name="Genome Res.">
        <title>The status, quality, and expansion of the NIH full-length cDNA project: the Mammalian Gene Collection (MGC).</title>
        <authorList>
            <consortium name="The MGC Project Team"/>
        </authorList>
    </citation>
    <scope>NUCLEOTIDE SEQUENCE [LARGE SCALE MRNA]</scope>
    <source>
        <tissue>Lymph</tissue>
    </source>
</reference>
<reference key="4">
    <citation type="journal article" date="2003" name="EMBO J.">
        <title>The B cell-specific major raft protein, Raftlin, is necessary for the integrity of lipid raft and BCR signal transduction.</title>
        <authorList>
            <person name="Saeki K."/>
            <person name="Miura Y."/>
            <person name="Aki D."/>
            <person name="Kurosaki T."/>
            <person name="Yoshimura A."/>
        </authorList>
    </citation>
    <scope>IDENTIFICATION BY MASS SPECTROMETRY</scope>
    <scope>FUNCTION</scope>
    <scope>TISSUE SPECIFICITY</scope>
    <scope>SUBCELLULAR LOCATION</scope>
    <scope>MUTAGENESIS OF GLY-2 AND CYS-3</scope>
    <scope>MYRISTOYLATION AT GLY-2</scope>
    <scope>PALMITOYLATION AT CYS-3</scope>
</reference>
<reference key="5">
    <citation type="journal article" date="2009" name="Sci. Signal.">
        <title>Quantitative phosphoproteomic analysis of T cell receptor signaling reveals system-wide modulation of protein-protein interactions.</title>
        <authorList>
            <person name="Mayya V."/>
            <person name="Lundgren D.H."/>
            <person name="Hwang S.-I."/>
            <person name="Rezaul K."/>
            <person name="Wu L."/>
            <person name="Eng J.K."/>
            <person name="Rodionov V."/>
            <person name="Han D.K."/>
        </authorList>
    </citation>
    <scope>IDENTIFICATION BY MASS SPECTROMETRY [LARGE SCALE ANALYSIS]</scope>
    <source>
        <tissue>Leukemic T-cell</tissue>
    </source>
</reference>
<reference key="6">
    <citation type="journal article" date="2010" name="Proteomics">
        <title>Strategy for comprehensive identification of human N-myristoylated proteins using an insect cell-free protein synthesis system.</title>
        <authorList>
            <person name="Suzuki T."/>
            <person name="Moriya K."/>
            <person name="Nagatoshi K."/>
            <person name="Ota Y."/>
            <person name="Ezure T."/>
            <person name="Ando E."/>
            <person name="Tsunasawa S."/>
            <person name="Utsumi T."/>
        </authorList>
    </citation>
    <scope>MYRISTOYLATION AT GLY-2</scope>
</reference>
<reference key="7">
    <citation type="journal article" date="2011" name="J. Biol. Chem.">
        <title>Raftlin is involved in the nucleocapture complex to induce poly(I:C)-mediated TLR3 activation.</title>
        <authorList>
            <person name="Watanabe A."/>
            <person name="Tatematsu M."/>
            <person name="Saeki K."/>
            <person name="Shibata S."/>
            <person name="Shime H."/>
            <person name="Yoshimura A."/>
            <person name="Obuse C."/>
            <person name="Seya T."/>
            <person name="Matsumoto M."/>
        </authorList>
    </citation>
    <scope>FUNCTION</scope>
    <scope>INTERACTION WITH CLTC</scope>
    <scope>SUBCELLULAR LOCATION</scope>
    <scope>TISSUE SPECIFICITY</scope>
</reference>
<reference key="8">
    <citation type="journal article" date="2011" name="Sci. Signal.">
        <title>System-wide temporal characterization of the proteome and phosphoproteome of human embryonic stem cell differentiation.</title>
        <authorList>
            <person name="Rigbolt K.T."/>
            <person name="Prokhorova T.A."/>
            <person name="Akimov V."/>
            <person name="Henningsen J."/>
            <person name="Johansen P.T."/>
            <person name="Kratchmarova I."/>
            <person name="Kassem M."/>
            <person name="Mann M."/>
            <person name="Olsen J.V."/>
            <person name="Blagoev B."/>
        </authorList>
    </citation>
    <scope>PHOSPHORYLATION [LARGE SCALE ANALYSIS] AT SER-220</scope>
    <scope>IDENTIFICATION BY MASS SPECTROMETRY [LARGE SCALE ANALYSIS]</scope>
</reference>
<reference key="9">
    <citation type="journal article" date="2014" name="J. Proteomics">
        <title>An enzyme assisted RP-RPLC approach for in-depth analysis of human liver phosphoproteome.</title>
        <authorList>
            <person name="Bian Y."/>
            <person name="Song C."/>
            <person name="Cheng K."/>
            <person name="Dong M."/>
            <person name="Wang F."/>
            <person name="Huang J."/>
            <person name="Sun D."/>
            <person name="Wang L."/>
            <person name="Ye M."/>
            <person name="Zou H."/>
        </authorList>
    </citation>
    <scope>PHOSPHORYLATION [LARGE SCALE ANALYSIS] AT SER-199</scope>
    <scope>IDENTIFICATION BY MASS SPECTROMETRY [LARGE SCALE ANALYSIS]</scope>
    <source>
        <tissue>Liver</tissue>
    </source>
</reference>
<reference key="10">
    <citation type="journal article" date="2015" name="Proteomics">
        <title>N-terminome analysis of the human mitochondrial proteome.</title>
        <authorList>
            <person name="Vaca Jacome A.S."/>
            <person name="Rabilloud T."/>
            <person name="Schaeffer-Reiss C."/>
            <person name="Rompais M."/>
            <person name="Ayoub D."/>
            <person name="Lane L."/>
            <person name="Bairoch A."/>
            <person name="Van Dorsselaer A."/>
            <person name="Carapito C."/>
        </authorList>
    </citation>
    <scope>IDENTIFICATION BY MASS SPECTROMETRY [LARGE SCALE ANALYSIS]</scope>
</reference>
<reference key="11">
    <citation type="journal article" date="2016" name="J. Immunol.">
        <title>Raftlin controls lipopolysaccharide-induced TLR4 internalization and TICAM-1 signaling in a cell type-specific manner.</title>
        <authorList>
            <person name="Tatematsu M."/>
            <person name="Yoshida R."/>
            <person name="Morioka Y."/>
            <person name="Ishii N."/>
            <person name="Funami K."/>
            <person name="Watanabe A."/>
            <person name="Saeki K."/>
            <person name="Seya T."/>
            <person name="Matsumoto M."/>
        </authorList>
    </citation>
    <scope>FUNCTION</scope>
    <scope>INTERACTION WITH TLR4; CLTC; AP2A1 AND AP2B1</scope>
    <scope>SUBCELLULAR LOCATION</scope>
    <scope>IDENTIFICATION BY MASS SPECTROMETRY</scope>
</reference>